<gene>
    <name evidence="1" type="primary">hemE</name>
    <name type="ordered locus">WIGBR5080</name>
</gene>
<evidence type="ECO:0000255" key="1">
    <source>
        <dbReference type="HAMAP-Rule" id="MF_00218"/>
    </source>
</evidence>
<accession>Q8CWI5</accession>
<feature type="chain" id="PRO_0000187660" description="Uroporphyrinogen decarboxylase">
    <location>
        <begin position="1"/>
        <end position="360"/>
    </location>
</feature>
<feature type="binding site" evidence="1">
    <location>
        <begin position="27"/>
        <end position="31"/>
    </location>
    <ligand>
        <name>substrate</name>
    </ligand>
</feature>
<feature type="binding site" evidence="1">
    <location>
        <position position="46"/>
    </location>
    <ligand>
        <name>substrate</name>
    </ligand>
</feature>
<feature type="binding site" evidence="1">
    <location>
        <position position="77"/>
    </location>
    <ligand>
        <name>substrate</name>
    </ligand>
</feature>
<feature type="binding site" evidence="1">
    <location>
        <position position="154"/>
    </location>
    <ligand>
        <name>substrate</name>
    </ligand>
</feature>
<feature type="binding site" evidence="1">
    <location>
        <position position="209"/>
    </location>
    <ligand>
        <name>substrate</name>
    </ligand>
</feature>
<feature type="binding site" evidence="1">
    <location>
        <position position="327"/>
    </location>
    <ligand>
        <name>substrate</name>
    </ligand>
</feature>
<feature type="site" description="Transition state stabilizer" evidence="1">
    <location>
        <position position="77"/>
    </location>
</feature>
<sequence length="360" mass="41359">MQFFENDSYLRSALRKSVKRTPIWIMRQSGRYLKEYQSIKKQAKDFLSLCKTPDLSSKAALIPIKKFSLDAAIIFSDILILPYAMGMDVNFYENLGPSFLNPISSISDMKNLNVPDPEKNLKYVLDSIKIICKELDKKIPLIGFSGSPWTLACYMIEGKCNKIFSKIKKMIYQNSKELHFLLKKITNSIILYLNSQIIYGVNAIIIFDTWGGILTEEKYCEYSLHYMSLIIKNLFCKYKGNKIPVTIFTKNGGQWIKKIAKSGCDVIALDWSVDIEYARKQVNGKIAIQGNMDPFELYGSFSSIEEETNKILSKFGYNSGHIFSLGHGIYKDTPPENVNFLIESVHNLSKKYHKKNRFKK</sequence>
<reference key="1">
    <citation type="journal article" date="2002" name="Nat. Genet.">
        <title>Genome sequence of the endocellular obligate symbiont of tsetse flies, Wigglesworthia glossinidia.</title>
        <authorList>
            <person name="Akman L."/>
            <person name="Yamashita A."/>
            <person name="Watanabe H."/>
            <person name="Oshima K."/>
            <person name="Shiba T."/>
            <person name="Hattori M."/>
            <person name="Aksoy S."/>
        </authorList>
    </citation>
    <scope>NUCLEOTIDE SEQUENCE [LARGE SCALE GENOMIC DNA]</scope>
</reference>
<name>DCUP_WIGBR</name>
<dbReference type="EC" id="4.1.1.37" evidence="1"/>
<dbReference type="EMBL" id="BA000021">
    <property type="protein sequence ID" value="BAC24654.1"/>
    <property type="molecule type" value="Genomic_DNA"/>
</dbReference>
<dbReference type="SMR" id="Q8CWI5"/>
<dbReference type="STRING" id="36870.gene:10369012"/>
<dbReference type="KEGG" id="wbr:hemE"/>
<dbReference type="eggNOG" id="COG0407">
    <property type="taxonomic scope" value="Bacteria"/>
</dbReference>
<dbReference type="HOGENOM" id="CLU_040933_0_0_6"/>
<dbReference type="OrthoDB" id="9806656at2"/>
<dbReference type="UniPathway" id="UPA00251">
    <property type="reaction ID" value="UER00321"/>
</dbReference>
<dbReference type="Proteomes" id="UP000000562">
    <property type="component" value="Chromosome"/>
</dbReference>
<dbReference type="GO" id="GO:0005829">
    <property type="term" value="C:cytosol"/>
    <property type="evidence" value="ECO:0007669"/>
    <property type="project" value="TreeGrafter"/>
</dbReference>
<dbReference type="GO" id="GO:0004853">
    <property type="term" value="F:uroporphyrinogen decarboxylase activity"/>
    <property type="evidence" value="ECO:0007669"/>
    <property type="project" value="UniProtKB-UniRule"/>
</dbReference>
<dbReference type="GO" id="GO:0019353">
    <property type="term" value="P:protoporphyrinogen IX biosynthetic process from glutamate"/>
    <property type="evidence" value="ECO:0007669"/>
    <property type="project" value="TreeGrafter"/>
</dbReference>
<dbReference type="CDD" id="cd00717">
    <property type="entry name" value="URO-D"/>
    <property type="match status" value="1"/>
</dbReference>
<dbReference type="FunFam" id="3.20.20.210:FF:000001">
    <property type="entry name" value="Uroporphyrinogen decarboxylase"/>
    <property type="match status" value="1"/>
</dbReference>
<dbReference type="Gene3D" id="3.20.20.210">
    <property type="match status" value="1"/>
</dbReference>
<dbReference type="HAMAP" id="MF_00218">
    <property type="entry name" value="URO_D"/>
    <property type="match status" value="1"/>
</dbReference>
<dbReference type="InterPro" id="IPR038071">
    <property type="entry name" value="UROD/MetE-like_sf"/>
</dbReference>
<dbReference type="InterPro" id="IPR006361">
    <property type="entry name" value="Uroporphyrinogen_deCO2ase_HemE"/>
</dbReference>
<dbReference type="InterPro" id="IPR000257">
    <property type="entry name" value="Uroporphyrinogen_deCOase"/>
</dbReference>
<dbReference type="NCBIfam" id="TIGR01464">
    <property type="entry name" value="hemE"/>
    <property type="match status" value="1"/>
</dbReference>
<dbReference type="PANTHER" id="PTHR21091">
    <property type="entry name" value="METHYLTETRAHYDROFOLATE:HOMOCYSTEINE METHYLTRANSFERASE RELATED"/>
    <property type="match status" value="1"/>
</dbReference>
<dbReference type="PANTHER" id="PTHR21091:SF169">
    <property type="entry name" value="UROPORPHYRINOGEN DECARBOXYLASE"/>
    <property type="match status" value="1"/>
</dbReference>
<dbReference type="Pfam" id="PF01208">
    <property type="entry name" value="URO-D"/>
    <property type="match status" value="1"/>
</dbReference>
<dbReference type="SUPFAM" id="SSF51726">
    <property type="entry name" value="UROD/MetE-like"/>
    <property type="match status" value="1"/>
</dbReference>
<dbReference type="PROSITE" id="PS00906">
    <property type="entry name" value="UROD_1"/>
    <property type="match status" value="1"/>
</dbReference>
<dbReference type="PROSITE" id="PS00907">
    <property type="entry name" value="UROD_2"/>
    <property type="match status" value="1"/>
</dbReference>
<organism>
    <name type="scientific">Wigglesworthia glossinidia brevipalpis</name>
    <dbReference type="NCBI Taxonomy" id="36870"/>
    <lineage>
        <taxon>Bacteria</taxon>
        <taxon>Pseudomonadati</taxon>
        <taxon>Pseudomonadota</taxon>
        <taxon>Gammaproteobacteria</taxon>
        <taxon>Enterobacterales</taxon>
        <taxon>Erwiniaceae</taxon>
        <taxon>Wigglesworthia</taxon>
    </lineage>
</organism>
<comment type="function">
    <text evidence="1">Catalyzes the decarboxylation of four acetate groups of uroporphyrinogen-III to yield coproporphyrinogen-III.</text>
</comment>
<comment type="catalytic activity">
    <reaction evidence="1">
        <text>uroporphyrinogen III + 4 H(+) = coproporphyrinogen III + 4 CO2</text>
        <dbReference type="Rhea" id="RHEA:19865"/>
        <dbReference type="ChEBI" id="CHEBI:15378"/>
        <dbReference type="ChEBI" id="CHEBI:16526"/>
        <dbReference type="ChEBI" id="CHEBI:57308"/>
        <dbReference type="ChEBI" id="CHEBI:57309"/>
        <dbReference type="EC" id="4.1.1.37"/>
    </reaction>
</comment>
<comment type="pathway">
    <text evidence="1">Porphyrin-containing compound metabolism; protoporphyrin-IX biosynthesis; coproporphyrinogen-III from 5-aminolevulinate: step 4/4.</text>
</comment>
<comment type="subunit">
    <text evidence="1">Homodimer.</text>
</comment>
<comment type="subcellular location">
    <subcellularLocation>
        <location evidence="1">Cytoplasm</location>
    </subcellularLocation>
</comment>
<comment type="similarity">
    <text evidence="1">Belongs to the uroporphyrinogen decarboxylase family.</text>
</comment>
<protein>
    <recommendedName>
        <fullName evidence="1">Uroporphyrinogen decarboxylase</fullName>
        <shortName evidence="1">UPD</shortName>
        <shortName evidence="1">URO-D</shortName>
        <ecNumber evidence="1">4.1.1.37</ecNumber>
    </recommendedName>
</protein>
<proteinExistence type="inferred from homology"/>
<keyword id="KW-0963">Cytoplasm</keyword>
<keyword id="KW-0210">Decarboxylase</keyword>
<keyword id="KW-0456">Lyase</keyword>
<keyword id="KW-0627">Porphyrin biosynthesis</keyword>
<keyword id="KW-1185">Reference proteome</keyword>